<accession>Q96G74</accession>
<accession>B4DGG7</accession>
<accession>G5E9D7</accession>
<accession>Q4KMN9</accession>
<accession>Q8N6T5</accession>
<accession>Q9H650</accession>
<accession>Q9H9U0</accession>
<accession>Q9NT65</accession>
<proteinExistence type="evidence at protein level"/>
<comment type="function">
    <text evidence="5 6 7 8 9">Deubiquitinating enzyme that functions as a negative regulator of the innate immune system (PubMed:17991829, PubMed:22245969, PubMed:23827681, PubMed:33523931). Has peptidase activity towards 'Lys-48'- and 'Lys-63'-linked polyubiquitin chains (PubMed:22245969). Can also cleave 'Lys-11'-linked ubiquitin chains (in vitro) (PubMed:22245969). Acts via TRAF3 deubiquitination and subsequent suppression of type I interferon (IFN) production (PubMed:17991829). Controls neuroectodermal differentiation through cleaving 'Lys-48'-linked ubiquitin chains to counteract degradation of select chromatin regulators such as ARID1A, HDAC2 and HCF1 (PubMed:33523931). Acts as a positive regulator of mTORC1 and mTORC2 signaling following phosphorylation by MTOR: acts by mediating deubiquitination of BTRC, leading to its stability (PubMed:33110214).</text>
</comment>
<comment type="catalytic activity">
    <reaction evidence="6 8">
        <text>Thiol-dependent hydrolysis of ester, thioester, amide, peptide and isopeptide bonds formed by the C-terminal Gly of ubiquitin (a 76-residue protein attached to proteins as an intracellular targeting signal).</text>
        <dbReference type="EC" id="3.4.19.12"/>
    </reaction>
</comment>
<comment type="activity regulation">
    <text evidence="5">Inhibited by N-ethyl-maleimide (NEM).</text>
</comment>
<comment type="subunit">
    <text evidence="5 6">Interacts with TRAF3.</text>
</comment>
<comment type="subcellular location">
    <subcellularLocation>
        <location evidence="9">Nucleus</location>
    </subcellularLocation>
</comment>
<comment type="alternative products">
    <event type="alternative splicing"/>
    <isoform>
        <id>Q96G74-1</id>
        <name>1</name>
        <sequence type="displayed"/>
    </isoform>
    <isoform>
        <id>Q96G74-2</id>
        <name>2</name>
        <sequence type="described" ref="VSP_023195 VSP_023192"/>
    </isoform>
    <isoform>
        <id>Q96G74-3</id>
        <name>3</name>
        <sequence type="described" ref="VSP_023192 VSP_023193 VSP_023194"/>
    </isoform>
    <isoform>
        <id>Q96G74-4</id>
        <name>4</name>
        <sequence type="described" ref="VSP_045185 VSP_023192"/>
    </isoform>
    <isoform>
        <id>Q96G74-5</id>
        <name>5</name>
        <sequence type="described" ref="VSP_023192"/>
    </isoform>
</comment>
<comment type="tissue specificity">
    <text evidence="5">Expressed in various tissues, including the liver and placenta, as well as in peripheral blood leukocytes.</text>
</comment>
<comment type="induction">
    <text evidence="6">Up-regulated by bacterial lipopolysaccharide (LPS) in bone marrow-derived macrophages.</text>
</comment>
<comment type="PTM">
    <text evidence="6 8 9">Phosphorylation at Ser-177 is required for deubiquitinating activity (PubMed:22245969, PubMed:33523931). Phosphorylation at Ser-328, Ser-337 and Ser-508 by MTOR promotes its activity (PubMed:33110214).</text>
</comment>
<comment type="disease" evidence="9">
    <disease id="DI-06024">
        <name>Multiple congenital anomalies-neurodevelopmental syndrome, X-linked</name>
        <acronym>MCAND</acronym>
        <description>An X-linked recessive, congenital disorder characterized by central nervous system, craniofacial, cardiac, skeletal, and genitourinary anomalies. Clinical features include poor growth, short stature, global developmental delay, impaired intellectual development, microcephaly, hydrocephalus, hypotonia, congenital heart defects, hypospadias, and other variable abnormalities. Brain imaging typically shows ventriculomegaly and thin corpus callosum. The severity of the disorder is highly variable, ranging from death in early infancy to survival into the second or third decade.</description>
        <dbReference type="MIM" id="301056"/>
    </disease>
    <text>The disease is caused by variants affecting the gene represented in this entry.</text>
</comment>
<comment type="miscellaneous">
    <molecule>Isoform 2</molecule>
    <text evidence="13">Dubious isoform produced through aberrant splice sites.</text>
</comment>
<comment type="miscellaneous">
    <molecule>Isoform 3</molecule>
    <text evidence="13">Dubious isoform produced through aberrant splice sites.</text>
</comment>
<comment type="similarity">
    <text evidence="13">Belongs to the peptidase C85 family.</text>
</comment>
<comment type="sequence caution" evidence="13">
    <conflict type="erroneous initiation">
        <sequence resource="EMBL-CDS" id="BAB14131"/>
    </conflict>
    <text>Truncated N-terminus.</text>
</comment>
<comment type="sequence caution" evidence="13">
    <conflict type="erroneous initiation">
        <sequence resource="EMBL-CDS" id="BAB15416"/>
    </conflict>
    <text>Truncated N-terminus.</text>
</comment>
<dbReference type="EC" id="3.4.19.12" evidence="6 8"/>
<dbReference type="EMBL" id="AK022612">
    <property type="protein sequence ID" value="BAB14131.1"/>
    <property type="status" value="ALT_INIT"/>
    <property type="molecule type" value="mRNA"/>
</dbReference>
<dbReference type="EMBL" id="AK026260">
    <property type="protein sequence ID" value="BAB15416.1"/>
    <property type="status" value="ALT_INIT"/>
    <property type="molecule type" value="mRNA"/>
</dbReference>
<dbReference type="EMBL" id="AK294590">
    <property type="protein sequence ID" value="BAG57778.1"/>
    <property type="molecule type" value="mRNA"/>
</dbReference>
<dbReference type="EMBL" id="AF207550">
    <property type="status" value="NOT_ANNOTATED_CDS"/>
    <property type="molecule type" value="Genomic_DNA"/>
</dbReference>
<dbReference type="EMBL" id="CH471224">
    <property type="protein sequence ID" value="EAW50724.1"/>
    <property type="molecule type" value="Genomic_DNA"/>
</dbReference>
<dbReference type="EMBL" id="BC009917">
    <property type="protein sequence ID" value="AAH09917.1"/>
    <property type="molecule type" value="mRNA"/>
</dbReference>
<dbReference type="EMBL" id="BC028225">
    <property type="protein sequence ID" value="AAH28225.1"/>
    <property type="molecule type" value="mRNA"/>
</dbReference>
<dbReference type="EMBL" id="BC098440">
    <property type="protein sequence ID" value="AAH98440.1"/>
    <property type="molecule type" value="mRNA"/>
</dbReference>
<dbReference type="EMBL" id="AL137509">
    <property type="protein sequence ID" value="CAB70778.1"/>
    <property type="molecule type" value="mRNA"/>
</dbReference>
<dbReference type="CCDS" id="CCDS14313.1">
    <molecule id="Q96G74-1"/>
</dbReference>
<dbReference type="CCDS" id="CCDS48104.1">
    <molecule id="Q96G74-5"/>
</dbReference>
<dbReference type="CCDS" id="CCDS48105.1">
    <molecule id="Q96G74-4"/>
</dbReference>
<dbReference type="PIR" id="T46265">
    <property type="entry name" value="T46265"/>
</dbReference>
<dbReference type="RefSeq" id="NP_001129629.1">
    <molecule id="Q96G74-5"/>
    <property type="nucleotide sequence ID" value="NM_001136157.2"/>
</dbReference>
<dbReference type="RefSeq" id="NP_001129630.1">
    <molecule id="Q96G74-5"/>
    <property type="nucleotide sequence ID" value="NM_001136158.2"/>
</dbReference>
<dbReference type="RefSeq" id="NP_001129631.1">
    <molecule id="Q96G74-4"/>
    <property type="nucleotide sequence ID" value="NM_001136159.2"/>
</dbReference>
<dbReference type="RefSeq" id="NP_060072.1">
    <molecule id="Q96G74-1"/>
    <property type="nucleotide sequence ID" value="NM_017602.4"/>
</dbReference>
<dbReference type="RefSeq" id="XP_006724600.1">
    <molecule id="Q96G74-1"/>
    <property type="nucleotide sequence ID" value="XM_006724537.4"/>
</dbReference>
<dbReference type="RefSeq" id="XP_024308165.1">
    <molecule id="Q96G74-4"/>
    <property type="nucleotide sequence ID" value="XM_024452397.2"/>
</dbReference>
<dbReference type="RefSeq" id="XP_054183347.1">
    <molecule id="Q96G74-1"/>
    <property type="nucleotide sequence ID" value="XM_054327372.1"/>
</dbReference>
<dbReference type="RefSeq" id="XP_054183354.1">
    <molecule id="Q96G74-4"/>
    <property type="nucleotide sequence ID" value="XM_054327379.1"/>
</dbReference>
<dbReference type="RefSeq" id="XP_054189378.1">
    <molecule id="Q96G74-1"/>
    <property type="nucleotide sequence ID" value="XM_054333403.1"/>
</dbReference>
<dbReference type="RefSeq" id="XP_054189385.1">
    <molecule id="Q96G74-4"/>
    <property type="nucleotide sequence ID" value="XM_054333410.1"/>
</dbReference>
<dbReference type="PDB" id="3PFY">
    <property type="method" value="X-ray"/>
    <property type="resolution" value="1.70 A"/>
    <property type="chains" value="A=172-344"/>
</dbReference>
<dbReference type="PDB" id="3TMO">
    <property type="method" value="X-ray"/>
    <property type="resolution" value="2.20 A"/>
    <property type="chains" value="A=172-351"/>
</dbReference>
<dbReference type="PDB" id="3TMP">
    <property type="method" value="X-ray"/>
    <property type="resolution" value="1.91 A"/>
    <property type="chains" value="A/C/E/G=172-351"/>
</dbReference>
<dbReference type="PDBsum" id="3PFY"/>
<dbReference type="PDBsum" id="3TMO"/>
<dbReference type="PDBsum" id="3TMP"/>
<dbReference type="SMR" id="Q96G74"/>
<dbReference type="BioGRID" id="120738">
    <property type="interactions" value="53"/>
</dbReference>
<dbReference type="DIP" id="DIP-53541N"/>
<dbReference type="FunCoup" id="Q96G74">
    <property type="interactions" value="3734"/>
</dbReference>
<dbReference type="IntAct" id="Q96G74">
    <property type="interactions" value="28"/>
</dbReference>
<dbReference type="MINT" id="Q96G74"/>
<dbReference type="STRING" id="9606.ENSP00000156084"/>
<dbReference type="ChEMBL" id="CHEMBL5291522"/>
<dbReference type="MEROPS" id="C85.001"/>
<dbReference type="GlyGen" id="Q96G74">
    <property type="glycosylation" value="1 site, 1 O-linked glycan (1 site)"/>
</dbReference>
<dbReference type="iPTMnet" id="Q96G74"/>
<dbReference type="PhosphoSitePlus" id="Q96G74"/>
<dbReference type="BioMuta" id="OTUD5"/>
<dbReference type="DMDM" id="74731791"/>
<dbReference type="jPOST" id="Q96G74"/>
<dbReference type="MassIVE" id="Q96G74"/>
<dbReference type="PaxDb" id="9606-ENSP00000156084"/>
<dbReference type="PeptideAtlas" id="Q96G74"/>
<dbReference type="ProteomicsDB" id="33910"/>
<dbReference type="ProteomicsDB" id="4133"/>
<dbReference type="ProteomicsDB" id="76598">
    <molecule id="Q96G74-1"/>
</dbReference>
<dbReference type="ProteomicsDB" id="76599">
    <molecule id="Q96G74-2"/>
</dbReference>
<dbReference type="ProteomicsDB" id="76600">
    <molecule id="Q96G74-3"/>
</dbReference>
<dbReference type="Pumba" id="Q96G74"/>
<dbReference type="TopDownProteomics" id="Q96G74-2">
    <molecule id="Q96G74-2"/>
</dbReference>
<dbReference type="Antibodypedia" id="409">
    <property type="antibodies" value="167 antibodies from 33 providers"/>
</dbReference>
<dbReference type="DNASU" id="55593"/>
<dbReference type="Ensembl" id="ENST00000156084.8">
    <molecule id="Q96G74-1"/>
    <property type="protein sequence ID" value="ENSP00000156084.4"/>
    <property type="gene ID" value="ENSG00000068308.15"/>
</dbReference>
<dbReference type="Ensembl" id="ENST00000376488.8">
    <molecule id="Q96G74-5"/>
    <property type="protein sequence ID" value="ENSP00000365671.3"/>
    <property type="gene ID" value="ENSG00000068308.15"/>
</dbReference>
<dbReference type="Ensembl" id="ENST00000396743.7">
    <molecule id="Q96G74-5"/>
    <property type="protein sequence ID" value="ENSP00000379969.3"/>
    <property type="gene ID" value="ENSG00000068308.15"/>
</dbReference>
<dbReference type="Ensembl" id="ENST00000428668.2">
    <molecule id="Q96G74-4"/>
    <property type="protein sequence ID" value="ENSP00000401629.2"/>
    <property type="gene ID" value="ENSG00000068308.15"/>
</dbReference>
<dbReference type="Ensembl" id="ENST00000710072.1">
    <molecule id="Q96G74-5"/>
    <property type="protein sequence ID" value="ENSP00000518038.1"/>
    <property type="gene ID" value="ENSG00000292211.1"/>
</dbReference>
<dbReference type="Ensembl" id="ENST00000710073.1">
    <molecule id="Q96G74-5"/>
    <property type="protein sequence ID" value="ENSP00000518039.1"/>
    <property type="gene ID" value="ENSG00000292211.1"/>
</dbReference>
<dbReference type="Ensembl" id="ENST00000710075.1">
    <molecule id="Q96G74-1"/>
    <property type="protein sequence ID" value="ENSP00000518041.1"/>
    <property type="gene ID" value="ENSG00000292211.1"/>
</dbReference>
<dbReference type="Ensembl" id="ENST00000710076.1">
    <molecule id="Q96G74-4"/>
    <property type="protein sequence ID" value="ENSP00000518042.1"/>
    <property type="gene ID" value="ENSG00000292211.1"/>
</dbReference>
<dbReference type="GeneID" id="55593"/>
<dbReference type="KEGG" id="hsa:55593"/>
<dbReference type="MANE-Select" id="ENST00000376488.8">
    <molecule id="Q96G74-5"/>
    <property type="protein sequence ID" value="ENSP00000365671.3"/>
    <property type="RefSeq nucleotide sequence ID" value="NM_001136157.2"/>
    <property type="RefSeq protein sequence ID" value="NP_001129629.1"/>
</dbReference>
<dbReference type="UCSC" id="uc004dlt.5">
    <molecule id="Q96G74-1"/>
    <property type="organism name" value="human"/>
</dbReference>
<dbReference type="AGR" id="HGNC:25402"/>
<dbReference type="CTD" id="55593"/>
<dbReference type="DisGeNET" id="55593"/>
<dbReference type="GeneCards" id="OTUD5"/>
<dbReference type="HGNC" id="HGNC:25402">
    <property type="gene designation" value="OTUD5"/>
</dbReference>
<dbReference type="HPA" id="ENSG00000068308">
    <property type="expression patterns" value="Low tissue specificity"/>
</dbReference>
<dbReference type="MalaCards" id="OTUD5"/>
<dbReference type="MIM" id="300713">
    <property type="type" value="gene"/>
</dbReference>
<dbReference type="MIM" id="301056">
    <property type="type" value="phenotype"/>
</dbReference>
<dbReference type="neXtProt" id="NX_Q96G74"/>
<dbReference type="OpenTargets" id="ENSG00000068308"/>
<dbReference type="Orphanet" id="528084">
    <property type="disease" value="Non-specific syndromic intellectual disability"/>
</dbReference>
<dbReference type="PharmGKB" id="PA142671217"/>
<dbReference type="VEuPathDB" id="HostDB:ENSG00000068308"/>
<dbReference type="eggNOG" id="KOG2605">
    <property type="taxonomic scope" value="Eukaryota"/>
</dbReference>
<dbReference type="GeneTree" id="ENSGT00940000158963"/>
<dbReference type="HOGENOM" id="CLU_021938_0_1_1"/>
<dbReference type="InParanoid" id="Q96G74"/>
<dbReference type="OMA" id="NKMHRDP"/>
<dbReference type="OrthoDB" id="409956at2759"/>
<dbReference type="PAN-GO" id="Q96G74">
    <property type="GO annotations" value="3 GO annotations based on evolutionary models"/>
</dbReference>
<dbReference type="PhylomeDB" id="Q96G74"/>
<dbReference type="TreeFam" id="TF326812"/>
<dbReference type="PathwayCommons" id="Q96G74"/>
<dbReference type="Reactome" id="R-HSA-5689896">
    <property type="pathway name" value="Ovarian tumor domain proteases"/>
</dbReference>
<dbReference type="Reactome" id="R-HSA-936440">
    <property type="pathway name" value="Negative regulators of DDX58/IFIH1 signaling"/>
</dbReference>
<dbReference type="SignaLink" id="Q96G74"/>
<dbReference type="SIGNOR" id="Q96G74"/>
<dbReference type="BioGRID-ORCS" id="55593">
    <property type="hits" value="126 hits in 799 CRISPR screens"/>
</dbReference>
<dbReference type="ChiTaRS" id="OTUD5">
    <property type="organism name" value="human"/>
</dbReference>
<dbReference type="EvolutionaryTrace" id="Q96G74"/>
<dbReference type="GenomeRNAi" id="55593"/>
<dbReference type="Pharos" id="Q96G74">
    <property type="development level" value="Tbio"/>
</dbReference>
<dbReference type="PRO" id="PR:Q96G74"/>
<dbReference type="Proteomes" id="UP000005640">
    <property type="component" value="Chromosome X"/>
</dbReference>
<dbReference type="RNAct" id="Q96G74">
    <property type="molecule type" value="protein"/>
</dbReference>
<dbReference type="Bgee" id="ENSG00000068308">
    <property type="expression patterns" value="Expressed in upper arm skin and 187 other cell types or tissues"/>
</dbReference>
<dbReference type="ExpressionAtlas" id="Q96G74">
    <property type="expression patterns" value="baseline and differential"/>
</dbReference>
<dbReference type="GO" id="GO:0005829">
    <property type="term" value="C:cytosol"/>
    <property type="evidence" value="ECO:0000304"/>
    <property type="project" value="Reactome"/>
</dbReference>
<dbReference type="GO" id="GO:0005634">
    <property type="term" value="C:nucleus"/>
    <property type="evidence" value="ECO:0000314"/>
    <property type="project" value="UniProtKB"/>
</dbReference>
<dbReference type="GO" id="GO:0004843">
    <property type="term" value="F:cysteine-type deubiquitinase activity"/>
    <property type="evidence" value="ECO:0000314"/>
    <property type="project" value="UniProtKB"/>
</dbReference>
<dbReference type="GO" id="GO:0101005">
    <property type="term" value="F:deubiquitinase activity"/>
    <property type="evidence" value="ECO:0000314"/>
    <property type="project" value="MGI"/>
</dbReference>
<dbReference type="GO" id="GO:1990380">
    <property type="term" value="F:K48-linked deubiquitinase activity"/>
    <property type="evidence" value="ECO:0000314"/>
    <property type="project" value="MGI"/>
</dbReference>
<dbReference type="GO" id="GO:0061578">
    <property type="term" value="F:K63-linked deubiquitinase activity"/>
    <property type="evidence" value="ECO:0000314"/>
    <property type="project" value="MGI"/>
</dbReference>
<dbReference type="GO" id="GO:0090090">
    <property type="term" value="P:negative regulation of canonical Wnt signaling pathway"/>
    <property type="evidence" value="ECO:0000315"/>
    <property type="project" value="FlyBase"/>
</dbReference>
<dbReference type="GO" id="GO:0032480">
    <property type="term" value="P:negative regulation of type I interferon production"/>
    <property type="evidence" value="ECO:0000304"/>
    <property type="project" value="Reactome"/>
</dbReference>
<dbReference type="GO" id="GO:0014033">
    <property type="term" value="P:neural crest cell differentiation"/>
    <property type="evidence" value="ECO:0000315"/>
    <property type="project" value="UniProtKB"/>
</dbReference>
<dbReference type="GO" id="GO:1904263">
    <property type="term" value="P:positive regulation of TORC1 signaling"/>
    <property type="evidence" value="ECO:0000315"/>
    <property type="project" value="FlyBase"/>
</dbReference>
<dbReference type="GO" id="GO:1904515">
    <property type="term" value="P:positive regulation of TORC2 signaling"/>
    <property type="evidence" value="ECO:0000315"/>
    <property type="project" value="FlyBase"/>
</dbReference>
<dbReference type="GO" id="GO:0016579">
    <property type="term" value="P:protein deubiquitination"/>
    <property type="evidence" value="ECO:0000314"/>
    <property type="project" value="MGI"/>
</dbReference>
<dbReference type="GO" id="GO:0071108">
    <property type="term" value="P:protein K48-linked deubiquitination"/>
    <property type="evidence" value="ECO:0000314"/>
    <property type="project" value="UniProtKB"/>
</dbReference>
<dbReference type="GO" id="GO:0070536">
    <property type="term" value="P:protein K63-linked deubiquitination"/>
    <property type="evidence" value="ECO:0000314"/>
    <property type="project" value="UniProtKB"/>
</dbReference>
<dbReference type="GO" id="GO:0006508">
    <property type="term" value="P:proteolysis"/>
    <property type="evidence" value="ECO:0007669"/>
    <property type="project" value="UniProtKB-KW"/>
</dbReference>
<dbReference type="GO" id="GO:0050776">
    <property type="term" value="P:regulation of immune response"/>
    <property type="evidence" value="ECO:0000318"/>
    <property type="project" value="GO_Central"/>
</dbReference>
<dbReference type="GO" id="GO:0032496">
    <property type="term" value="P:response to lipopolysaccharide"/>
    <property type="evidence" value="ECO:0000314"/>
    <property type="project" value="UniProtKB"/>
</dbReference>
<dbReference type="CDD" id="cd22752">
    <property type="entry name" value="OTU_OTUD5-like"/>
    <property type="match status" value="1"/>
</dbReference>
<dbReference type="FunFam" id="3.90.70.80:FF:000002">
    <property type="entry name" value="OTU domain-containing protein 5 isoform X2"/>
    <property type="match status" value="1"/>
</dbReference>
<dbReference type="Gene3D" id="3.90.70.80">
    <property type="match status" value="1"/>
</dbReference>
<dbReference type="InterPro" id="IPR003323">
    <property type="entry name" value="OTU_dom"/>
</dbReference>
<dbReference type="InterPro" id="IPR038765">
    <property type="entry name" value="Papain-like_cys_pep_sf"/>
</dbReference>
<dbReference type="InterPro" id="IPR050704">
    <property type="entry name" value="Peptidase_C85-like"/>
</dbReference>
<dbReference type="PANTHER" id="PTHR12419">
    <property type="entry name" value="OTU DOMAIN CONTAINING PROTEIN"/>
    <property type="match status" value="1"/>
</dbReference>
<dbReference type="PANTHER" id="PTHR12419:SF4">
    <property type="entry name" value="OTU DOMAIN-CONTAINING PROTEIN 5"/>
    <property type="match status" value="1"/>
</dbReference>
<dbReference type="Pfam" id="PF02338">
    <property type="entry name" value="OTU"/>
    <property type="match status" value="1"/>
</dbReference>
<dbReference type="SUPFAM" id="SSF54001">
    <property type="entry name" value="Cysteine proteinases"/>
    <property type="match status" value="1"/>
</dbReference>
<dbReference type="PROSITE" id="PS50802">
    <property type="entry name" value="OTU"/>
    <property type="match status" value="1"/>
</dbReference>
<protein>
    <recommendedName>
        <fullName evidence="13">OTU domain-containing protein 5</fullName>
        <ecNumber evidence="6 8">3.4.19.12</ecNumber>
    </recommendedName>
    <alternativeName>
        <fullName>Deubiquitinating enzyme A</fullName>
        <shortName>DUBA</shortName>
    </alternativeName>
</protein>
<gene>
    <name evidence="15" type="primary">OTUD5</name>
</gene>
<reference key="1">
    <citation type="journal article" date="2004" name="Nat. Genet.">
        <title>Complete sequencing and characterization of 21,243 full-length human cDNAs.</title>
        <authorList>
            <person name="Ota T."/>
            <person name="Suzuki Y."/>
            <person name="Nishikawa T."/>
            <person name="Otsuki T."/>
            <person name="Sugiyama T."/>
            <person name="Irie R."/>
            <person name="Wakamatsu A."/>
            <person name="Hayashi K."/>
            <person name="Sato H."/>
            <person name="Nagai K."/>
            <person name="Kimura K."/>
            <person name="Makita H."/>
            <person name="Sekine M."/>
            <person name="Obayashi M."/>
            <person name="Nishi T."/>
            <person name="Shibahara T."/>
            <person name="Tanaka T."/>
            <person name="Ishii S."/>
            <person name="Yamamoto J."/>
            <person name="Saito K."/>
            <person name="Kawai Y."/>
            <person name="Isono Y."/>
            <person name="Nakamura Y."/>
            <person name="Nagahari K."/>
            <person name="Murakami K."/>
            <person name="Yasuda T."/>
            <person name="Iwayanagi T."/>
            <person name="Wagatsuma M."/>
            <person name="Shiratori A."/>
            <person name="Sudo H."/>
            <person name="Hosoiri T."/>
            <person name="Kaku Y."/>
            <person name="Kodaira H."/>
            <person name="Kondo H."/>
            <person name="Sugawara M."/>
            <person name="Takahashi M."/>
            <person name="Kanda K."/>
            <person name="Yokoi T."/>
            <person name="Furuya T."/>
            <person name="Kikkawa E."/>
            <person name="Omura Y."/>
            <person name="Abe K."/>
            <person name="Kamihara K."/>
            <person name="Katsuta N."/>
            <person name="Sato K."/>
            <person name="Tanikawa M."/>
            <person name="Yamazaki M."/>
            <person name="Ninomiya K."/>
            <person name="Ishibashi T."/>
            <person name="Yamashita H."/>
            <person name="Murakawa K."/>
            <person name="Fujimori K."/>
            <person name="Tanai H."/>
            <person name="Kimata M."/>
            <person name="Watanabe M."/>
            <person name="Hiraoka S."/>
            <person name="Chiba Y."/>
            <person name="Ishida S."/>
            <person name="Ono Y."/>
            <person name="Takiguchi S."/>
            <person name="Watanabe S."/>
            <person name="Yosida M."/>
            <person name="Hotuta T."/>
            <person name="Kusano J."/>
            <person name="Kanehori K."/>
            <person name="Takahashi-Fujii A."/>
            <person name="Hara H."/>
            <person name="Tanase T.-O."/>
            <person name="Nomura Y."/>
            <person name="Togiya S."/>
            <person name="Komai F."/>
            <person name="Hara R."/>
            <person name="Takeuchi K."/>
            <person name="Arita M."/>
            <person name="Imose N."/>
            <person name="Musashino K."/>
            <person name="Yuuki H."/>
            <person name="Oshima A."/>
            <person name="Sasaki N."/>
            <person name="Aotsuka S."/>
            <person name="Yoshikawa Y."/>
            <person name="Matsunawa H."/>
            <person name="Ichihara T."/>
            <person name="Shiohata N."/>
            <person name="Sano S."/>
            <person name="Moriya S."/>
            <person name="Momiyama H."/>
            <person name="Satoh N."/>
            <person name="Takami S."/>
            <person name="Terashima Y."/>
            <person name="Suzuki O."/>
            <person name="Nakagawa S."/>
            <person name="Senoh A."/>
            <person name="Mizoguchi H."/>
            <person name="Goto Y."/>
            <person name="Shimizu F."/>
            <person name="Wakebe H."/>
            <person name="Hishigaki H."/>
            <person name="Watanabe T."/>
            <person name="Sugiyama A."/>
            <person name="Takemoto M."/>
            <person name="Kawakami B."/>
            <person name="Yamazaki M."/>
            <person name="Watanabe K."/>
            <person name="Kumagai A."/>
            <person name="Itakura S."/>
            <person name="Fukuzumi Y."/>
            <person name="Fujimori Y."/>
            <person name="Komiyama M."/>
            <person name="Tashiro H."/>
            <person name="Tanigami A."/>
            <person name="Fujiwara T."/>
            <person name="Ono T."/>
            <person name="Yamada K."/>
            <person name="Fujii Y."/>
            <person name="Ozaki K."/>
            <person name="Hirao M."/>
            <person name="Ohmori Y."/>
            <person name="Kawabata A."/>
            <person name="Hikiji T."/>
            <person name="Kobatake N."/>
            <person name="Inagaki H."/>
            <person name="Ikema Y."/>
            <person name="Okamoto S."/>
            <person name="Okitani R."/>
            <person name="Kawakami T."/>
            <person name="Noguchi S."/>
            <person name="Itoh T."/>
            <person name="Shigeta K."/>
            <person name="Senba T."/>
            <person name="Matsumura K."/>
            <person name="Nakajima Y."/>
            <person name="Mizuno T."/>
            <person name="Morinaga M."/>
            <person name="Sasaki M."/>
            <person name="Togashi T."/>
            <person name="Oyama M."/>
            <person name="Hata H."/>
            <person name="Watanabe M."/>
            <person name="Komatsu T."/>
            <person name="Mizushima-Sugano J."/>
            <person name="Satoh T."/>
            <person name="Shirai Y."/>
            <person name="Takahashi Y."/>
            <person name="Nakagawa K."/>
            <person name="Okumura K."/>
            <person name="Nagase T."/>
            <person name="Nomura N."/>
            <person name="Kikuchi H."/>
            <person name="Masuho Y."/>
            <person name="Yamashita R."/>
            <person name="Nakai K."/>
            <person name="Yada T."/>
            <person name="Nakamura Y."/>
            <person name="Ohara O."/>
            <person name="Isogai T."/>
            <person name="Sugano S."/>
        </authorList>
    </citation>
    <scope>NUCLEOTIDE SEQUENCE [LARGE SCALE MRNA] (ISOFORM 4)</scope>
    <scope>NUCLEOTIDE SEQUENCE [LARGE SCALE MRNA] OF 176-571 (ISOFORM 5)</scope>
    <scope>NUCLEOTIDE SEQUENCE [LARGE SCALE MRNA] OF 253-571 (ISOFORM 1)</scope>
    <source>
        <tissue>Brain</tissue>
        <tissue>Small intestine</tissue>
    </source>
</reference>
<reference key="2">
    <citation type="journal article" date="2005" name="Nature">
        <title>The DNA sequence of the human X chromosome.</title>
        <authorList>
            <person name="Ross M.T."/>
            <person name="Grafham D.V."/>
            <person name="Coffey A.J."/>
            <person name="Scherer S."/>
            <person name="McLay K."/>
            <person name="Muzny D."/>
            <person name="Platzer M."/>
            <person name="Howell G.R."/>
            <person name="Burrows C."/>
            <person name="Bird C.P."/>
            <person name="Frankish A."/>
            <person name="Lovell F.L."/>
            <person name="Howe K.L."/>
            <person name="Ashurst J.L."/>
            <person name="Fulton R.S."/>
            <person name="Sudbrak R."/>
            <person name="Wen G."/>
            <person name="Jones M.C."/>
            <person name="Hurles M.E."/>
            <person name="Andrews T.D."/>
            <person name="Scott C.E."/>
            <person name="Searle S."/>
            <person name="Ramser J."/>
            <person name="Whittaker A."/>
            <person name="Deadman R."/>
            <person name="Carter N.P."/>
            <person name="Hunt S.E."/>
            <person name="Chen R."/>
            <person name="Cree A."/>
            <person name="Gunaratne P."/>
            <person name="Havlak P."/>
            <person name="Hodgson A."/>
            <person name="Metzker M.L."/>
            <person name="Richards S."/>
            <person name="Scott G."/>
            <person name="Steffen D."/>
            <person name="Sodergren E."/>
            <person name="Wheeler D.A."/>
            <person name="Worley K.C."/>
            <person name="Ainscough R."/>
            <person name="Ambrose K.D."/>
            <person name="Ansari-Lari M.A."/>
            <person name="Aradhya S."/>
            <person name="Ashwell R.I."/>
            <person name="Babbage A.K."/>
            <person name="Bagguley C.L."/>
            <person name="Ballabio A."/>
            <person name="Banerjee R."/>
            <person name="Barker G.E."/>
            <person name="Barlow K.F."/>
            <person name="Barrett I.P."/>
            <person name="Bates K.N."/>
            <person name="Beare D.M."/>
            <person name="Beasley H."/>
            <person name="Beasley O."/>
            <person name="Beck A."/>
            <person name="Bethel G."/>
            <person name="Blechschmidt K."/>
            <person name="Brady N."/>
            <person name="Bray-Allen S."/>
            <person name="Bridgeman A.M."/>
            <person name="Brown A.J."/>
            <person name="Brown M.J."/>
            <person name="Bonnin D."/>
            <person name="Bruford E.A."/>
            <person name="Buhay C."/>
            <person name="Burch P."/>
            <person name="Burford D."/>
            <person name="Burgess J."/>
            <person name="Burrill W."/>
            <person name="Burton J."/>
            <person name="Bye J.M."/>
            <person name="Carder C."/>
            <person name="Carrel L."/>
            <person name="Chako J."/>
            <person name="Chapman J.C."/>
            <person name="Chavez D."/>
            <person name="Chen E."/>
            <person name="Chen G."/>
            <person name="Chen Y."/>
            <person name="Chen Z."/>
            <person name="Chinault C."/>
            <person name="Ciccodicola A."/>
            <person name="Clark S.Y."/>
            <person name="Clarke G."/>
            <person name="Clee C.M."/>
            <person name="Clegg S."/>
            <person name="Clerc-Blankenburg K."/>
            <person name="Clifford K."/>
            <person name="Cobley V."/>
            <person name="Cole C.G."/>
            <person name="Conquer J.S."/>
            <person name="Corby N."/>
            <person name="Connor R.E."/>
            <person name="David R."/>
            <person name="Davies J."/>
            <person name="Davis C."/>
            <person name="Davis J."/>
            <person name="Delgado O."/>
            <person name="Deshazo D."/>
            <person name="Dhami P."/>
            <person name="Ding Y."/>
            <person name="Dinh H."/>
            <person name="Dodsworth S."/>
            <person name="Draper H."/>
            <person name="Dugan-Rocha S."/>
            <person name="Dunham A."/>
            <person name="Dunn M."/>
            <person name="Durbin K.J."/>
            <person name="Dutta I."/>
            <person name="Eades T."/>
            <person name="Ellwood M."/>
            <person name="Emery-Cohen A."/>
            <person name="Errington H."/>
            <person name="Evans K.L."/>
            <person name="Faulkner L."/>
            <person name="Francis F."/>
            <person name="Frankland J."/>
            <person name="Fraser A.E."/>
            <person name="Galgoczy P."/>
            <person name="Gilbert J."/>
            <person name="Gill R."/>
            <person name="Gloeckner G."/>
            <person name="Gregory S.G."/>
            <person name="Gribble S."/>
            <person name="Griffiths C."/>
            <person name="Grocock R."/>
            <person name="Gu Y."/>
            <person name="Gwilliam R."/>
            <person name="Hamilton C."/>
            <person name="Hart E.A."/>
            <person name="Hawes A."/>
            <person name="Heath P.D."/>
            <person name="Heitmann K."/>
            <person name="Hennig S."/>
            <person name="Hernandez J."/>
            <person name="Hinzmann B."/>
            <person name="Ho S."/>
            <person name="Hoffs M."/>
            <person name="Howden P.J."/>
            <person name="Huckle E.J."/>
            <person name="Hume J."/>
            <person name="Hunt P.J."/>
            <person name="Hunt A.R."/>
            <person name="Isherwood J."/>
            <person name="Jacob L."/>
            <person name="Johnson D."/>
            <person name="Jones S."/>
            <person name="de Jong P.J."/>
            <person name="Joseph S.S."/>
            <person name="Keenan S."/>
            <person name="Kelly S."/>
            <person name="Kershaw J.K."/>
            <person name="Khan Z."/>
            <person name="Kioschis P."/>
            <person name="Klages S."/>
            <person name="Knights A.J."/>
            <person name="Kosiura A."/>
            <person name="Kovar-Smith C."/>
            <person name="Laird G.K."/>
            <person name="Langford C."/>
            <person name="Lawlor S."/>
            <person name="Leversha M."/>
            <person name="Lewis L."/>
            <person name="Liu W."/>
            <person name="Lloyd C."/>
            <person name="Lloyd D.M."/>
            <person name="Loulseged H."/>
            <person name="Loveland J.E."/>
            <person name="Lovell J.D."/>
            <person name="Lozado R."/>
            <person name="Lu J."/>
            <person name="Lyne R."/>
            <person name="Ma J."/>
            <person name="Maheshwari M."/>
            <person name="Matthews L.H."/>
            <person name="McDowall J."/>
            <person name="McLaren S."/>
            <person name="McMurray A."/>
            <person name="Meidl P."/>
            <person name="Meitinger T."/>
            <person name="Milne S."/>
            <person name="Miner G."/>
            <person name="Mistry S.L."/>
            <person name="Morgan M."/>
            <person name="Morris S."/>
            <person name="Mueller I."/>
            <person name="Mullikin J.C."/>
            <person name="Nguyen N."/>
            <person name="Nordsiek G."/>
            <person name="Nyakatura G."/>
            <person name="O'dell C.N."/>
            <person name="Okwuonu G."/>
            <person name="Palmer S."/>
            <person name="Pandian R."/>
            <person name="Parker D."/>
            <person name="Parrish J."/>
            <person name="Pasternak S."/>
            <person name="Patel D."/>
            <person name="Pearce A.V."/>
            <person name="Pearson D.M."/>
            <person name="Pelan S.E."/>
            <person name="Perez L."/>
            <person name="Porter K.M."/>
            <person name="Ramsey Y."/>
            <person name="Reichwald K."/>
            <person name="Rhodes S."/>
            <person name="Ridler K.A."/>
            <person name="Schlessinger D."/>
            <person name="Schueler M.G."/>
            <person name="Sehra H.K."/>
            <person name="Shaw-Smith C."/>
            <person name="Shen H."/>
            <person name="Sheridan E.M."/>
            <person name="Shownkeen R."/>
            <person name="Skuce C.D."/>
            <person name="Smith M.L."/>
            <person name="Sotheran E.C."/>
            <person name="Steingruber H.E."/>
            <person name="Steward C.A."/>
            <person name="Storey R."/>
            <person name="Swann R.M."/>
            <person name="Swarbreck D."/>
            <person name="Tabor P.E."/>
            <person name="Taudien S."/>
            <person name="Taylor T."/>
            <person name="Teague B."/>
            <person name="Thomas K."/>
            <person name="Thorpe A."/>
            <person name="Timms K."/>
            <person name="Tracey A."/>
            <person name="Trevanion S."/>
            <person name="Tromans A.C."/>
            <person name="d'Urso M."/>
            <person name="Verduzco D."/>
            <person name="Villasana D."/>
            <person name="Waldron L."/>
            <person name="Wall M."/>
            <person name="Wang Q."/>
            <person name="Warren J."/>
            <person name="Warry G.L."/>
            <person name="Wei X."/>
            <person name="West A."/>
            <person name="Whitehead S.L."/>
            <person name="Whiteley M.N."/>
            <person name="Wilkinson J.E."/>
            <person name="Willey D.L."/>
            <person name="Williams G."/>
            <person name="Williams L."/>
            <person name="Williamson A."/>
            <person name="Williamson H."/>
            <person name="Wilming L."/>
            <person name="Woodmansey R.L."/>
            <person name="Wray P.W."/>
            <person name="Yen J."/>
            <person name="Zhang J."/>
            <person name="Zhou J."/>
            <person name="Zoghbi H."/>
            <person name="Zorilla S."/>
            <person name="Buck D."/>
            <person name="Reinhardt R."/>
            <person name="Poustka A."/>
            <person name="Rosenthal A."/>
            <person name="Lehrach H."/>
            <person name="Meindl A."/>
            <person name="Minx P.J."/>
            <person name="Hillier L.W."/>
            <person name="Willard H.F."/>
            <person name="Wilson R.K."/>
            <person name="Waterston R.H."/>
            <person name="Rice C.M."/>
            <person name="Vaudin M."/>
            <person name="Coulson A."/>
            <person name="Nelson D.L."/>
            <person name="Weinstock G."/>
            <person name="Sulston J.E."/>
            <person name="Durbin R.M."/>
            <person name="Hubbard T."/>
            <person name="Gibbs R.A."/>
            <person name="Beck S."/>
            <person name="Rogers J."/>
            <person name="Bentley D.R."/>
        </authorList>
    </citation>
    <scope>NUCLEOTIDE SEQUENCE [LARGE SCALE GENOMIC DNA]</scope>
</reference>
<reference key="3">
    <citation type="submission" date="2005-07" db="EMBL/GenBank/DDBJ databases">
        <authorList>
            <person name="Mural R.J."/>
            <person name="Istrail S."/>
            <person name="Sutton G.G."/>
            <person name="Florea L."/>
            <person name="Halpern A.L."/>
            <person name="Mobarry C.M."/>
            <person name="Lippert R."/>
            <person name="Walenz B."/>
            <person name="Shatkay H."/>
            <person name="Dew I."/>
            <person name="Miller J.R."/>
            <person name="Flanigan M.J."/>
            <person name="Edwards N.J."/>
            <person name="Bolanos R."/>
            <person name="Fasulo D."/>
            <person name="Halldorsson B.V."/>
            <person name="Hannenhalli S."/>
            <person name="Turner R."/>
            <person name="Yooseph S."/>
            <person name="Lu F."/>
            <person name="Nusskern D.R."/>
            <person name="Shue B.C."/>
            <person name="Zheng X.H."/>
            <person name="Zhong F."/>
            <person name="Delcher A.L."/>
            <person name="Huson D.H."/>
            <person name="Kravitz S.A."/>
            <person name="Mouchard L."/>
            <person name="Reinert K."/>
            <person name="Remington K.A."/>
            <person name="Clark A.G."/>
            <person name="Waterman M.S."/>
            <person name="Eichler E.E."/>
            <person name="Adams M.D."/>
            <person name="Hunkapiller M.W."/>
            <person name="Myers E.W."/>
            <person name="Venter J.C."/>
        </authorList>
    </citation>
    <scope>NUCLEOTIDE SEQUENCE [LARGE SCALE GENOMIC DNA]</scope>
</reference>
<reference key="4">
    <citation type="journal article" date="2004" name="Genome Res.">
        <title>The status, quality, and expansion of the NIH full-length cDNA project: the Mammalian Gene Collection (MGC).</title>
        <authorList>
            <consortium name="The MGC Project Team"/>
        </authorList>
    </citation>
    <scope>NUCLEOTIDE SEQUENCE [LARGE SCALE MRNA] (ISOFORMS 1; 2 AND 3)</scope>
    <source>
        <tissue>Kidney</tissue>
        <tissue>Skin</tissue>
    </source>
</reference>
<reference key="5">
    <citation type="journal article" date="2007" name="BMC Genomics">
        <title>The full-ORF clone resource of the German cDNA consortium.</title>
        <authorList>
            <person name="Bechtel S."/>
            <person name="Rosenfelder H."/>
            <person name="Duda A."/>
            <person name="Schmidt C.P."/>
            <person name="Ernst U."/>
            <person name="Wellenreuther R."/>
            <person name="Mehrle A."/>
            <person name="Schuster C."/>
            <person name="Bahr A."/>
            <person name="Bloecker H."/>
            <person name="Heubner D."/>
            <person name="Hoerlein A."/>
            <person name="Michel G."/>
            <person name="Wedler H."/>
            <person name="Koehrer K."/>
            <person name="Ottenwaelder B."/>
            <person name="Poustka A."/>
            <person name="Wiemann S."/>
            <person name="Schupp I."/>
        </authorList>
    </citation>
    <scope>NUCLEOTIDE SEQUENCE [LARGE SCALE MRNA] OF 140-571 (ISOFORM 5)</scope>
    <source>
        <tissue>Amygdala</tissue>
    </source>
</reference>
<reference key="6">
    <citation type="journal article" date="2006" name="Nat. Biotechnol.">
        <title>A probability-based approach for high-throughput protein phosphorylation analysis and site localization.</title>
        <authorList>
            <person name="Beausoleil S.A."/>
            <person name="Villen J."/>
            <person name="Gerber S.A."/>
            <person name="Rush J."/>
            <person name="Gygi S.P."/>
        </authorList>
    </citation>
    <scope>IDENTIFICATION BY MASS SPECTROMETRY [LARGE SCALE ANALYSIS]</scope>
    <source>
        <tissue>Cervix carcinoma</tissue>
    </source>
</reference>
<reference key="7">
    <citation type="journal article" date="2007" name="Science">
        <title>DUBA: a deubiquitinase that regulates type I interferon production.</title>
        <authorList>
            <person name="Kayagaki N."/>
            <person name="Phung Q."/>
            <person name="Chan S."/>
            <person name="Chaudhari R."/>
            <person name="Quan C."/>
            <person name="O'Rourke K.M."/>
            <person name="Eby M."/>
            <person name="Pietras E."/>
            <person name="Cheng G."/>
            <person name="Bazan J.F."/>
            <person name="Zhang Z."/>
            <person name="Arnott D."/>
            <person name="Dixit V.M."/>
        </authorList>
    </citation>
    <scope>FUNCTION</scope>
    <scope>ACTIVITY REGULATION</scope>
    <scope>TISSUE SPECIFICITY</scope>
    <scope>INTERACTION WITH TRAF3</scope>
    <scope>MUTAGENESIS OF CYS-224; LEU-542 AND SER-549</scope>
</reference>
<reference key="8">
    <citation type="journal article" date="2008" name="Mol. Cell">
        <title>Kinase-selective enrichment enables quantitative phosphoproteomics of the kinome across the cell cycle.</title>
        <authorList>
            <person name="Daub H."/>
            <person name="Olsen J.V."/>
            <person name="Bairlein M."/>
            <person name="Gnad F."/>
            <person name="Oppermann F.S."/>
            <person name="Korner R."/>
            <person name="Greff Z."/>
            <person name="Keri G."/>
            <person name="Stemmann O."/>
            <person name="Mann M."/>
        </authorList>
    </citation>
    <scope>PHOSPHORYLATION [LARGE SCALE ANALYSIS] AT SER-64</scope>
    <scope>IDENTIFICATION BY MASS SPECTROMETRY [LARGE SCALE ANALYSIS]</scope>
    <source>
        <tissue>Cervix carcinoma</tissue>
    </source>
</reference>
<reference key="9">
    <citation type="journal article" date="2008" name="Proc. Natl. Acad. Sci. U.S.A.">
        <title>A quantitative atlas of mitotic phosphorylation.</title>
        <authorList>
            <person name="Dephoure N."/>
            <person name="Zhou C."/>
            <person name="Villen J."/>
            <person name="Beausoleil S.A."/>
            <person name="Bakalarski C.E."/>
            <person name="Elledge S.J."/>
            <person name="Gygi S.P."/>
        </authorList>
    </citation>
    <scope>PHOSPHORYLATION [LARGE SCALE ANALYSIS] AT SER-165; SER-177 AND SER-452</scope>
    <scope>IDENTIFICATION BY MASS SPECTROMETRY [LARGE SCALE ANALYSIS]</scope>
    <source>
        <tissue>Cervix carcinoma</tissue>
    </source>
</reference>
<reference key="10">
    <citation type="journal article" date="2009" name="Anal. Chem.">
        <title>Lys-N and trypsin cover complementary parts of the phosphoproteome in a refined SCX-based approach.</title>
        <authorList>
            <person name="Gauci S."/>
            <person name="Helbig A.O."/>
            <person name="Slijper M."/>
            <person name="Krijgsveld J."/>
            <person name="Heck A.J."/>
            <person name="Mohammed S."/>
        </authorList>
    </citation>
    <scope>IDENTIFICATION BY MASS SPECTROMETRY [LARGE SCALE ANALYSIS]</scope>
</reference>
<reference key="11">
    <citation type="journal article" date="2009" name="Sci. Signal.">
        <title>Quantitative phosphoproteomic analysis of T cell receptor signaling reveals system-wide modulation of protein-protein interactions.</title>
        <authorList>
            <person name="Mayya V."/>
            <person name="Lundgren D.H."/>
            <person name="Hwang S.-I."/>
            <person name="Rezaul K."/>
            <person name="Wu L."/>
            <person name="Eng J.K."/>
            <person name="Rodionov V."/>
            <person name="Han D.K."/>
        </authorList>
    </citation>
    <scope>PHOSPHORYLATION [LARGE SCALE ANALYSIS] AT SER-165 AND SER-177</scope>
    <scope>IDENTIFICATION BY MASS SPECTROMETRY [LARGE SCALE ANALYSIS]</scope>
    <source>
        <tissue>Leukemic T-cell</tissue>
    </source>
</reference>
<reference key="12">
    <citation type="journal article" date="2010" name="Sci. Signal.">
        <title>Quantitative phosphoproteomics reveals widespread full phosphorylation site occupancy during mitosis.</title>
        <authorList>
            <person name="Olsen J.V."/>
            <person name="Vermeulen M."/>
            <person name="Santamaria A."/>
            <person name="Kumar C."/>
            <person name="Miller M.L."/>
            <person name="Jensen L.J."/>
            <person name="Gnad F."/>
            <person name="Cox J."/>
            <person name="Jensen T.S."/>
            <person name="Nigg E.A."/>
            <person name="Brunak S."/>
            <person name="Mann M."/>
        </authorList>
    </citation>
    <scope>PHOSPHORYLATION [LARGE SCALE ANALYSIS] AT SER-64</scope>
    <scope>IDENTIFICATION BY MASS SPECTROMETRY [LARGE SCALE ANALYSIS]</scope>
    <source>
        <tissue>Cervix carcinoma</tissue>
    </source>
</reference>
<reference key="13">
    <citation type="journal article" date="2013" name="Cell">
        <title>OTU deubiquitinases reveal mechanisms of linkage specificity and enable ubiquitin chain restriction analysis.</title>
        <authorList>
            <person name="Mevissen T.E."/>
            <person name="Hospenthal M.K."/>
            <person name="Geurink P.P."/>
            <person name="Elliott P.R."/>
            <person name="Akutsu M."/>
            <person name="Arnaudo N."/>
            <person name="Ekkebus R."/>
            <person name="Kulathu Y."/>
            <person name="Wauer T."/>
            <person name="El Oualid F."/>
            <person name="Freund S.M."/>
            <person name="Ovaa H."/>
            <person name="Komander D."/>
        </authorList>
    </citation>
    <scope>FUNCTION</scope>
</reference>
<reference key="14">
    <citation type="journal article" date="2013" name="J. Proteome Res.">
        <title>Toward a comprehensive characterization of a human cancer cell phosphoproteome.</title>
        <authorList>
            <person name="Zhou H."/>
            <person name="Di Palma S."/>
            <person name="Preisinger C."/>
            <person name="Peng M."/>
            <person name="Polat A.N."/>
            <person name="Heck A.J."/>
            <person name="Mohammed S."/>
        </authorList>
    </citation>
    <scope>PHOSPHORYLATION [LARGE SCALE ANALYSIS] AT SER-64; SER-165 AND SER-177</scope>
    <scope>IDENTIFICATION BY MASS SPECTROMETRY [LARGE SCALE ANALYSIS]</scope>
    <source>
        <tissue>Cervix carcinoma</tissue>
        <tissue>Erythroleukemia</tissue>
    </source>
</reference>
<reference key="15">
    <citation type="journal article" date="2014" name="J. Proteomics">
        <title>An enzyme assisted RP-RPLC approach for in-depth analysis of human liver phosphoproteome.</title>
        <authorList>
            <person name="Bian Y."/>
            <person name="Song C."/>
            <person name="Cheng K."/>
            <person name="Dong M."/>
            <person name="Wang F."/>
            <person name="Huang J."/>
            <person name="Sun D."/>
            <person name="Wang L."/>
            <person name="Ye M."/>
            <person name="Zou H."/>
        </authorList>
    </citation>
    <scope>PHOSPHORYLATION [LARGE SCALE ANALYSIS] AT SER-165</scope>
    <scope>IDENTIFICATION BY MASS SPECTROMETRY [LARGE SCALE ANALYSIS]</scope>
    <source>
        <tissue>Liver</tissue>
    </source>
</reference>
<reference key="16">
    <citation type="journal article" date="2021" name="Cell Death Differ.">
        <title>Deubiquitinase OTUD5 is a positive regulator of mTORC1 and mTORC2 signaling pathways.</title>
        <authorList>
            <person name="Cho J.H."/>
            <person name="Kim K."/>
            <person name="Kim S.A."/>
            <person name="Park S."/>
            <person name="Park B.O."/>
            <person name="Kim J.H."/>
            <person name="Kim S.Y."/>
            <person name="Kwon M.J."/>
            <person name="Han M.H."/>
            <person name="Lee S.B."/>
            <person name="Park B.C."/>
            <person name="Park S.G."/>
            <person name="Kim J.H."/>
            <person name="Kim S."/>
        </authorList>
    </citation>
    <scope>FUNCTION</scope>
    <scope>CATALYTIC ACTIVITY</scope>
    <scope>PHOSPHORYLATION AT THR-195; SER-328; SER-337; SER-375; SER-452; THR-507 AND SER-508</scope>
    <scope>MUTAGENESIS OF CYS-224; SER-328; SER-337 AND SER-508</scope>
</reference>
<reference key="17">
    <citation type="journal article" date="2021" name="Sci. Adv.">
        <title>Linkage-specific deubiquitylation by OTUD5 defines an embryonic pathway intolerant to genomic variation.</title>
        <authorList>
            <consortium name="Undiagnosed Diseases Network"/>
            <person name="Beck D.B."/>
            <person name="Basar M.A."/>
            <person name="Asmar A.J."/>
            <person name="Thompson J.J."/>
            <person name="Oda H."/>
            <person name="Uehara D.T."/>
            <person name="Saida K."/>
            <person name="Pajusalu S."/>
            <person name="Talvik I."/>
            <person name="D'Souza P."/>
            <person name="Bodurtha J."/>
            <person name="Mu W."/>
            <person name="Baranano K.W."/>
            <person name="Miyake N."/>
            <person name="Wang R."/>
            <person name="Kempers M."/>
            <person name="Tamada T."/>
            <person name="Nishimura Y."/>
            <person name="Okada S."/>
            <person name="Kosho T."/>
            <person name="Dale R."/>
            <person name="Mitra A."/>
            <person name="Macnamara E."/>
            <person name="Matsumoto N."/>
            <person name="Inazawa J."/>
            <person name="Walkiewicz M."/>
            <person name="Ounap K."/>
            <person name="Tifft C.J."/>
            <person name="Aksentijevich I."/>
            <person name="Kastner D.L."/>
            <person name="Rocha P.P."/>
            <person name="Werner A."/>
        </authorList>
    </citation>
    <scope>FUNCTION</scope>
    <scope>VARIANTS MCAND 161-VAL--GLY-163 DEL; ASN-256; TRP-274; PRO-352; TRP-404; SER-494 AND TRP-520</scope>
    <scope>CHARACTERIZATION OF VARIANTS MCAND 161-VAL--GLY-163 DEL; ASN-256; TRP-274; PRO-352 AND SER-494</scope>
    <scope>SUBCELLULAR LOCATION</scope>
    <scope>MUTAGENESIS OF CYS-224</scope>
    <scope>PHOSPHORYLATION</scope>
</reference>
<reference key="18">
    <citation type="submission" date="2010-12" db="PDB data bank">
        <title>The catalytic domain of human OTUD5.</title>
        <authorList>
            <consortium name="Structural genomics consortium (SGC)"/>
        </authorList>
    </citation>
    <scope>X-RAY CRYSTALLOGRAPHY (1.7 ANGSTROMS) OF 172-339</scope>
</reference>
<reference key="19">
    <citation type="journal article" date="2012" name="Nat. Struct. Mol. Biol.">
        <title>Phosphorylation-dependent activity of the deubiquitinase DUBA.</title>
        <authorList>
            <person name="Huang O.W."/>
            <person name="Ma X."/>
            <person name="Yin J."/>
            <person name="Flinders J."/>
            <person name="Maurer T."/>
            <person name="Kayagaki N."/>
            <person name="Phung Q."/>
            <person name="Bosanac I."/>
            <person name="Arnott D."/>
            <person name="Dixit V.M."/>
            <person name="Hymowitz S.G."/>
            <person name="Starovasnik M.A."/>
            <person name="Cochran A.G."/>
        </authorList>
    </citation>
    <scope>X-RAY CRYSTALLOGRAPHY (1.91 ANGSTROMS) OF 172-351 IN COMPLEX WITH UBIQUITIN</scope>
    <scope>CATALYTIC ACTIVITY</scope>
    <scope>FUNCTION</scope>
    <scope>INDUCTION</scope>
    <scope>PHOSPHORYLATION AT SER-64; SER-165; TYR-175; SER-177 AND THR-507</scope>
    <scope>MUTAGENESIS OF SER-177 AND CYS-224</scope>
    <scope>ACTIVE SITE</scope>
    <scope>IDENTIFICATION BY MASS SPECTROMETRY</scope>
</reference>
<keyword id="KW-0002">3D-structure</keyword>
<keyword id="KW-0025">Alternative splicing</keyword>
<keyword id="KW-0225">Disease variant</keyword>
<keyword id="KW-0378">Hydrolase</keyword>
<keyword id="KW-0991">Intellectual disability</keyword>
<keyword id="KW-0539">Nucleus</keyword>
<keyword id="KW-0597">Phosphoprotein</keyword>
<keyword id="KW-0645">Protease</keyword>
<keyword id="KW-1267">Proteomics identification</keyword>
<keyword id="KW-1185">Reference proteome</keyword>
<keyword id="KW-0788">Thiol protease</keyword>
<keyword id="KW-0833">Ubl conjugation pathway</keyword>
<name>OTUD5_HUMAN</name>
<evidence type="ECO:0000250" key="1"/>
<evidence type="ECO:0000255" key="2"/>
<evidence type="ECO:0000255" key="3">
    <source>
        <dbReference type="PROSITE-ProRule" id="PRU00139"/>
    </source>
</evidence>
<evidence type="ECO:0000256" key="4">
    <source>
        <dbReference type="SAM" id="MobiDB-lite"/>
    </source>
</evidence>
<evidence type="ECO:0000269" key="5">
    <source>
    </source>
</evidence>
<evidence type="ECO:0000269" key="6">
    <source>
    </source>
</evidence>
<evidence type="ECO:0000269" key="7">
    <source>
    </source>
</evidence>
<evidence type="ECO:0000269" key="8">
    <source>
    </source>
</evidence>
<evidence type="ECO:0000269" key="9">
    <source>
    </source>
</evidence>
<evidence type="ECO:0000303" key="10">
    <source>
    </source>
</evidence>
<evidence type="ECO:0000303" key="11">
    <source>
    </source>
</evidence>
<evidence type="ECO:0000303" key="12">
    <source>
    </source>
</evidence>
<evidence type="ECO:0000305" key="13"/>
<evidence type="ECO:0000305" key="14">
    <source>
    </source>
</evidence>
<evidence type="ECO:0000312" key="15">
    <source>
        <dbReference type="HGNC" id="HGNC:25402"/>
    </source>
</evidence>
<evidence type="ECO:0007744" key="16">
    <source>
    </source>
</evidence>
<evidence type="ECO:0007744" key="17">
    <source>
    </source>
</evidence>
<evidence type="ECO:0007744" key="18">
    <source>
    </source>
</evidence>
<evidence type="ECO:0007744" key="19">
    <source>
    </source>
</evidence>
<evidence type="ECO:0007744" key="20">
    <source>
    </source>
</evidence>
<evidence type="ECO:0007744" key="21">
    <source>
    </source>
</evidence>
<evidence type="ECO:0007829" key="22">
    <source>
        <dbReference type="PDB" id="3PFY"/>
    </source>
</evidence>
<evidence type="ECO:0007829" key="23">
    <source>
        <dbReference type="PDB" id="3TMO"/>
    </source>
</evidence>
<evidence type="ECO:0007829" key="24">
    <source>
        <dbReference type="PDB" id="3TMP"/>
    </source>
</evidence>
<sequence length="571" mass="60626">MTILPKKKPPPPDADPANEPPPPGPMPPAPRRGGGVGVGGGGTGVGGGDRDRDSGVVGARPRASPPPQGPLPGPPGALHRWALAVPPGAVAGPRPQQASPPPCGGPGGPGGGPGDALGAAAAGVGAAGVVVGVGGAVGVGGCCSGPGHSKRRRQAPGVGAVGGGSPEREEVGAGYNSEDEYEAAAARIEAMDPATVEQQEHWFEKALRDKKGFIIKQMKEDGACLFRAVADQVYGDQDMHEVVRKHCMDYLMKNADYFSNYVTEDFTTYINRKRKNNCHGNHIEMQAMAEMYNRPVEVYQYSTGTSAVEPINTFHGIHQNEDEPIRVSYHRNIHYNSVVNPNKATIGVGLGLPSFKPGFAEQSLMKNAIKTSEESWIEQQMLEDKKRATDWEATNEAIEEQVARESYLQWLRDQEKQARQVRGPSQPRKASATCSSATAAASSGLEEWTSRSPRQRSSASSPEHPELHAELGMKPPSPGTVLALAKPPSPCAPGTSSQFSAGADRATSPLVSLYPALECRALIQQMSPSAFGLNDWDDDEILASVLAVSQQEYLDSMKKNKVHRDPPPDKS</sequence>
<feature type="chain" id="PRO_0000278223" description="OTU domain-containing protein 5">
    <location>
        <begin position="1"/>
        <end position="571"/>
    </location>
</feature>
<feature type="domain" description="OTU" evidence="3">
    <location>
        <begin position="213"/>
        <end position="341"/>
    </location>
</feature>
<feature type="region of interest" description="Disordered" evidence="4">
    <location>
        <begin position="1"/>
        <end position="111"/>
    </location>
</feature>
<feature type="region of interest" description="Disordered" evidence="4">
    <location>
        <begin position="146"/>
        <end position="175"/>
    </location>
</feature>
<feature type="region of interest" description="Cys-loop" evidence="1">
    <location>
        <begin position="218"/>
        <end position="224"/>
    </location>
</feature>
<feature type="region of interest" description="Variable-loop" evidence="1">
    <location>
        <begin position="273"/>
        <end position="283"/>
    </location>
</feature>
<feature type="region of interest" description="His-loop" evidence="1">
    <location>
        <begin position="329"/>
        <end position="334"/>
    </location>
</feature>
<feature type="region of interest" description="Disordered" evidence="4">
    <location>
        <begin position="418"/>
        <end position="502"/>
    </location>
</feature>
<feature type="compositionally biased region" description="Pro residues" evidence="4">
    <location>
        <begin position="11"/>
        <end position="30"/>
    </location>
</feature>
<feature type="compositionally biased region" description="Gly residues" evidence="4">
    <location>
        <begin position="32"/>
        <end position="47"/>
    </location>
</feature>
<feature type="compositionally biased region" description="Pro residues" evidence="4">
    <location>
        <begin position="63"/>
        <end position="75"/>
    </location>
</feature>
<feature type="compositionally biased region" description="Low complexity" evidence="4">
    <location>
        <begin position="84"/>
        <end position="97"/>
    </location>
</feature>
<feature type="compositionally biased region" description="Low complexity" evidence="4">
    <location>
        <begin position="430"/>
        <end position="443"/>
    </location>
</feature>
<feature type="compositionally biased region" description="Low complexity" evidence="4">
    <location>
        <begin position="450"/>
        <end position="462"/>
    </location>
</feature>
<feature type="active site" evidence="2">
    <location>
        <position position="221"/>
    </location>
</feature>
<feature type="active site" description="Nucleophile" evidence="6 8">
    <location>
        <position position="224"/>
    </location>
</feature>
<feature type="active site" evidence="14">
    <location>
        <position position="334"/>
    </location>
</feature>
<feature type="modified residue" description="Phosphoserine" evidence="6 17 19 20">
    <location>
        <position position="64"/>
    </location>
</feature>
<feature type="modified residue" description="Phosphoserine" evidence="6 16 18 20 21">
    <location>
        <position position="165"/>
    </location>
</feature>
<feature type="modified residue" description="Phosphotyrosine" evidence="6">
    <location>
        <position position="175"/>
    </location>
</feature>
<feature type="modified residue" description="Phosphoserine" evidence="6 16 18 20">
    <location>
        <position position="177"/>
    </location>
</feature>
<feature type="modified residue" description="Phosphothreonine" evidence="8">
    <location>
        <position position="195"/>
    </location>
</feature>
<feature type="modified residue" description="Phosphoserine; by MTOR" evidence="8">
    <location>
        <position position="328"/>
    </location>
</feature>
<feature type="modified residue" description="Phosphoserine" evidence="8">
    <location>
        <position position="337"/>
    </location>
</feature>
<feature type="modified residue" description="Phosphoserine" evidence="8">
    <location>
        <position position="375"/>
    </location>
</feature>
<feature type="modified residue" description="Phosphoserine" evidence="8 16">
    <location>
        <position position="452"/>
    </location>
</feature>
<feature type="modified residue" description="Phosphothreonine" evidence="6 8">
    <location>
        <position position="507"/>
    </location>
</feature>
<feature type="modified residue" description="Phosphoserine; by MTOR" evidence="8">
    <location>
        <position position="508"/>
    </location>
</feature>
<feature type="splice variant" id="VSP_045185" description="In isoform 4." evidence="10">
    <location>
        <begin position="1"/>
        <end position="217"/>
    </location>
</feature>
<feature type="splice variant" id="VSP_023195" description="In isoform 2." evidence="11">
    <location>
        <begin position="17"/>
        <end position="40"/>
    </location>
</feature>
<feature type="splice variant" id="VSP_023192" description="In isoform 2, isoform 3, isoform 4 and isoform 5." evidence="10 11 12">
    <location>
        <begin position="304"/>
        <end position="308"/>
    </location>
</feature>
<feature type="splice variant" id="VSP_023193" description="In isoform 3." evidence="11">
    <original>HRDP</original>
    <variation>PCRC</variation>
    <location>
        <begin position="563"/>
        <end position="566"/>
    </location>
</feature>
<feature type="splice variant" id="VSP_023194" description="In isoform 3." evidence="11">
    <location>
        <begin position="567"/>
        <end position="571"/>
    </location>
</feature>
<feature type="sequence variant" id="VAR_085336" description="In MCAND; reduced cleavage activity towards 'K-48'-chains but not 'K-63'-chains; no effect on phosphorylation." evidence="9">
    <location>
        <begin position="161"/>
        <end position="163"/>
    </location>
</feature>
<feature type="sequence variant" id="VAR_085337" description="In MCAND; reduced cleavage activity towards 'K-63'- and 'K-48'-chains; no effect on phosphorylation." evidence="9">
    <original>D</original>
    <variation>N</variation>
    <location>
        <position position="256"/>
    </location>
</feature>
<feature type="sequence variant" id="VAR_085338" description="In MCAND; partial mislocation at the cytoplasm; reduced cleavage activity towards 'K-63'- and 'K-48'-chains; no effect on phosphorylation; dbSNP:rs2063805506." evidence="9">
    <original>R</original>
    <variation>W</variation>
    <location>
        <position position="274"/>
    </location>
</feature>
<feature type="sequence variant" id="VAR_085339" description="In MCAND; in mice embryo the mutation is lethal; reduced cleavage activity towards 'K-48'-chains but not 'K-63'-chains; no effect on nuclear location; no effect on phosphorylation; dbSNP:rs2063801903." evidence="9">
    <original>L</original>
    <variation>P</variation>
    <location>
        <position position="352"/>
    </location>
</feature>
<feature type="sequence variant" id="VAR_085340" description="In MCAND; uncertain significance; dbSNP:rs2063659512." evidence="9">
    <original>R</original>
    <variation>W</variation>
    <location>
        <position position="404"/>
    </location>
</feature>
<feature type="sequence variant" id="VAR_085341" description="In MCAND; decreased mRNA and protein levels; no effect on cleavage activity towards 'K-48'-chains but not 'K-63'-chains; in mice embryo the mutation is lethal; no effect on phosphorylation." evidence="9">
    <original>G</original>
    <variation>S</variation>
    <location>
        <position position="494"/>
    </location>
</feature>
<feature type="sequence variant" id="VAR_085342" description="In MCAND; uncertain significance." evidence="9">
    <original>R</original>
    <variation>W</variation>
    <location>
        <position position="520"/>
    </location>
</feature>
<feature type="mutagenesis site" description="Loss of deubiquitinase activity. Abolishes activation by protein kinases." evidence="6">
    <original>S</original>
    <variation>D</variation>
    <variation>E</variation>
    <location>
        <position position="177"/>
    </location>
</feature>
<feature type="mutagenesis site" description="Loss of deubiquitinase activity. Loss of suppression of IFN production. No effect on nuclear location." evidence="5 6 8 9">
    <original>C</original>
    <variation>S</variation>
    <location>
        <position position="224"/>
    </location>
</feature>
<feature type="mutagenesis site" description="Reduced phosphorylation. Reduced ability to promote stabilization of BTRC; when associated with A-337 and A-508." evidence="8">
    <original>S</original>
    <variation>A</variation>
    <location>
        <position position="328"/>
    </location>
</feature>
<feature type="mutagenesis site" description="Reduced phosphorylation. Reduced ability to promote stabilization of BTRC; when associated with A-328 and A-508." evidence="8">
    <original>S</original>
    <variation>A</variation>
    <location>
        <position position="337"/>
    </location>
</feature>
<feature type="mutagenesis site" description="Reduced phosphorylation. Reduced ability to promote stabilization of BTRC; when associated with A-328 and A-337." evidence="8">
    <original>S</original>
    <variation>A</variation>
    <location>
        <position position="508"/>
    </location>
</feature>
<feature type="mutagenesis site" description="Loss of 'K-48'- and 'K-63'-linked polyubiquitin chain binding. Partial loss of TRAF3 deubiquitination; when associated with A-549." evidence="5">
    <original>L</original>
    <variation>A</variation>
    <location>
        <position position="542"/>
    </location>
</feature>
<feature type="mutagenesis site" description="Loss of 'K-48'- and 'K-63'-linked polyubiquitin chain binding. Partial loss of TRAF3 deubiquitination; when associated with A-542." evidence="5">
    <original>S</original>
    <variation>A</variation>
    <location>
        <position position="549"/>
    </location>
</feature>
<feature type="helix" evidence="24">
    <location>
        <begin position="178"/>
        <end position="180"/>
    </location>
</feature>
<feature type="helix" evidence="24">
    <location>
        <begin position="181"/>
        <end position="186"/>
    </location>
</feature>
<feature type="helix" evidence="22">
    <location>
        <begin position="193"/>
        <end position="211"/>
    </location>
</feature>
<feature type="strand" evidence="22">
    <location>
        <begin position="214"/>
        <end position="216"/>
    </location>
</feature>
<feature type="helix" evidence="22">
    <location>
        <begin position="224"/>
        <end position="234"/>
    </location>
</feature>
<feature type="helix" evidence="22">
    <location>
        <begin position="237"/>
        <end position="239"/>
    </location>
</feature>
<feature type="helix" evidence="22">
    <location>
        <begin position="240"/>
        <end position="253"/>
    </location>
</feature>
<feature type="helix" evidence="22">
    <location>
        <begin position="255"/>
        <end position="258"/>
    </location>
</feature>
<feature type="helix" evidence="24">
    <location>
        <begin position="259"/>
        <end position="261"/>
    </location>
</feature>
<feature type="helix" evidence="24">
    <location>
        <begin position="266"/>
        <end position="273"/>
    </location>
</feature>
<feature type="helix" evidence="22">
    <location>
        <begin position="282"/>
        <end position="292"/>
    </location>
</feature>
<feature type="strand" evidence="22">
    <location>
        <begin position="296"/>
        <end position="301"/>
    </location>
</feature>
<feature type="strand" evidence="23">
    <location>
        <begin position="303"/>
        <end position="305"/>
    </location>
</feature>
<feature type="strand" evidence="22">
    <location>
        <begin position="311"/>
        <end position="314"/>
    </location>
</feature>
<feature type="strand" evidence="22">
    <location>
        <begin position="325"/>
        <end position="330"/>
    </location>
</feature>
<feature type="turn" evidence="22">
    <location>
        <begin position="331"/>
        <end position="333"/>
    </location>
</feature>
<feature type="strand" evidence="22">
    <location>
        <begin position="334"/>
        <end position="339"/>
    </location>
</feature>
<organism>
    <name type="scientific">Homo sapiens</name>
    <name type="common">Human</name>
    <dbReference type="NCBI Taxonomy" id="9606"/>
    <lineage>
        <taxon>Eukaryota</taxon>
        <taxon>Metazoa</taxon>
        <taxon>Chordata</taxon>
        <taxon>Craniata</taxon>
        <taxon>Vertebrata</taxon>
        <taxon>Euteleostomi</taxon>
        <taxon>Mammalia</taxon>
        <taxon>Eutheria</taxon>
        <taxon>Euarchontoglires</taxon>
        <taxon>Primates</taxon>
        <taxon>Haplorrhini</taxon>
        <taxon>Catarrhini</taxon>
        <taxon>Hominidae</taxon>
        <taxon>Homo</taxon>
    </lineage>
</organism>